<keyword id="KW-0002">3D-structure</keyword>
<keyword id="KW-0238">DNA-binding</keyword>
<keyword id="KW-0539">Nucleus</keyword>
<keyword id="KW-1185">Reference proteome</keyword>
<keyword id="KW-0804">Transcription</keyword>
<keyword id="KW-0805">Transcription regulation</keyword>
<name>Y1664_ARATH</name>
<gene>
    <name type="ordered locus">At1g16640</name>
    <name type="ORF">F19K19.7</name>
</gene>
<organism>
    <name type="scientific">Arabidopsis thaliana</name>
    <name type="common">Mouse-ear cress</name>
    <dbReference type="NCBI Taxonomy" id="3702"/>
    <lineage>
        <taxon>Eukaryota</taxon>
        <taxon>Viridiplantae</taxon>
        <taxon>Streptophyta</taxon>
        <taxon>Embryophyta</taxon>
        <taxon>Tracheophyta</taxon>
        <taxon>Spermatophyta</taxon>
        <taxon>Magnoliopsida</taxon>
        <taxon>eudicotyledons</taxon>
        <taxon>Gunneridae</taxon>
        <taxon>Pentapetalae</taxon>
        <taxon>rosids</taxon>
        <taxon>malvids</taxon>
        <taxon>Brassicales</taxon>
        <taxon>Brassicaceae</taxon>
        <taxon>Camelineae</taxon>
        <taxon>Arabidopsis</taxon>
    </lineage>
</organism>
<evidence type="ECO:0000255" key="1">
    <source>
        <dbReference type="PROSITE-ProRule" id="PRU00326"/>
    </source>
</evidence>
<evidence type="ECO:0007829" key="2">
    <source>
        <dbReference type="PDB" id="1YEL"/>
    </source>
</evidence>
<feature type="chain" id="PRO_0000111530" description="B3 domain-containing protein At1g16640">
    <location>
        <begin position="1"/>
        <end position="134"/>
    </location>
</feature>
<feature type="DNA-binding region" description="TF-B3" evidence="1">
    <location>
        <begin position="7"/>
        <end position="100"/>
    </location>
</feature>
<feature type="strand" evidence="2">
    <location>
        <begin position="7"/>
        <end position="12"/>
    </location>
</feature>
<feature type="helix" evidence="2">
    <location>
        <begin position="15"/>
        <end position="18"/>
    </location>
</feature>
<feature type="helix" evidence="2">
    <location>
        <begin position="26"/>
        <end position="29"/>
    </location>
</feature>
<feature type="strand" evidence="2">
    <location>
        <begin position="38"/>
        <end position="44"/>
    </location>
</feature>
<feature type="strand" evidence="2">
    <location>
        <begin position="49"/>
        <end position="57"/>
    </location>
</feature>
<feature type="strand" evidence="2">
    <location>
        <begin position="60"/>
        <end position="63"/>
    </location>
</feature>
<feature type="helix" evidence="2">
    <location>
        <begin position="67"/>
        <end position="74"/>
    </location>
</feature>
<feature type="strand" evidence="2">
    <location>
        <begin position="81"/>
        <end position="86"/>
    </location>
</feature>
<feature type="strand" evidence="2">
    <location>
        <begin position="88"/>
        <end position="97"/>
    </location>
</feature>
<reference key="1">
    <citation type="journal article" date="2000" name="Nature">
        <title>Sequence and analysis of chromosome 1 of the plant Arabidopsis thaliana.</title>
        <authorList>
            <person name="Theologis A."/>
            <person name="Ecker J.R."/>
            <person name="Palm C.J."/>
            <person name="Federspiel N.A."/>
            <person name="Kaul S."/>
            <person name="White O."/>
            <person name="Alonso J."/>
            <person name="Altafi H."/>
            <person name="Araujo R."/>
            <person name="Bowman C.L."/>
            <person name="Brooks S.Y."/>
            <person name="Buehler E."/>
            <person name="Chan A."/>
            <person name="Chao Q."/>
            <person name="Chen H."/>
            <person name="Cheuk R.F."/>
            <person name="Chin C.W."/>
            <person name="Chung M.K."/>
            <person name="Conn L."/>
            <person name="Conway A.B."/>
            <person name="Conway A.R."/>
            <person name="Creasy T.H."/>
            <person name="Dewar K."/>
            <person name="Dunn P."/>
            <person name="Etgu P."/>
            <person name="Feldblyum T.V."/>
            <person name="Feng J.-D."/>
            <person name="Fong B."/>
            <person name="Fujii C.Y."/>
            <person name="Gill J.E."/>
            <person name="Goldsmith A.D."/>
            <person name="Haas B."/>
            <person name="Hansen N.F."/>
            <person name="Hughes B."/>
            <person name="Huizar L."/>
            <person name="Hunter J.L."/>
            <person name="Jenkins J."/>
            <person name="Johnson-Hopson C."/>
            <person name="Khan S."/>
            <person name="Khaykin E."/>
            <person name="Kim C.J."/>
            <person name="Koo H.L."/>
            <person name="Kremenetskaia I."/>
            <person name="Kurtz D.B."/>
            <person name="Kwan A."/>
            <person name="Lam B."/>
            <person name="Langin-Hooper S."/>
            <person name="Lee A."/>
            <person name="Lee J.M."/>
            <person name="Lenz C.A."/>
            <person name="Li J.H."/>
            <person name="Li Y.-P."/>
            <person name="Lin X."/>
            <person name="Liu S.X."/>
            <person name="Liu Z.A."/>
            <person name="Luros J.S."/>
            <person name="Maiti R."/>
            <person name="Marziali A."/>
            <person name="Militscher J."/>
            <person name="Miranda M."/>
            <person name="Nguyen M."/>
            <person name="Nierman W.C."/>
            <person name="Osborne B.I."/>
            <person name="Pai G."/>
            <person name="Peterson J."/>
            <person name="Pham P.K."/>
            <person name="Rizzo M."/>
            <person name="Rooney T."/>
            <person name="Rowley D."/>
            <person name="Sakano H."/>
            <person name="Salzberg S.L."/>
            <person name="Schwartz J.R."/>
            <person name="Shinn P."/>
            <person name="Southwick A.M."/>
            <person name="Sun H."/>
            <person name="Tallon L.J."/>
            <person name="Tambunga G."/>
            <person name="Toriumi M.J."/>
            <person name="Town C.D."/>
            <person name="Utterback T."/>
            <person name="Van Aken S."/>
            <person name="Vaysberg M."/>
            <person name="Vysotskaia V.S."/>
            <person name="Walker M."/>
            <person name="Wu D."/>
            <person name="Yu G."/>
            <person name="Fraser C.M."/>
            <person name="Venter J.C."/>
            <person name="Davis R.W."/>
        </authorList>
    </citation>
    <scope>NUCLEOTIDE SEQUENCE [LARGE SCALE GENOMIC DNA]</scope>
    <source>
        <strain>cv. Columbia</strain>
    </source>
</reference>
<reference key="2">
    <citation type="journal article" date="2017" name="Plant J.">
        <title>Araport11: a complete reannotation of the Arabidopsis thaliana reference genome.</title>
        <authorList>
            <person name="Cheng C.Y."/>
            <person name="Krishnakumar V."/>
            <person name="Chan A.P."/>
            <person name="Thibaud-Nissen F."/>
            <person name="Schobel S."/>
            <person name="Town C.D."/>
        </authorList>
    </citation>
    <scope>GENOME REANNOTATION</scope>
    <source>
        <strain>cv. Columbia</strain>
    </source>
</reference>
<reference key="3">
    <citation type="submission" date="2004-06" db="EMBL/GenBank/DDBJ databases">
        <title>Arabidopsis cDNA clones.</title>
        <authorList>
            <person name="Cheuk R.F."/>
            <person name="Chen H."/>
            <person name="Kim C.J."/>
            <person name="Shinn P."/>
            <person name="Ecker J.R."/>
        </authorList>
    </citation>
    <scope>NUCLEOTIDE SEQUENCE [LARGE SCALE MRNA]</scope>
    <source>
        <strain>cv. Columbia</strain>
    </source>
</reference>
<reference key="4">
    <citation type="journal article" date="2008" name="Trends Plant Sci.">
        <title>The plant B3 superfamily.</title>
        <authorList>
            <person name="Swaminathan K."/>
            <person name="Peterson K."/>
            <person name="Jack T."/>
        </authorList>
    </citation>
    <scope>GENE FAMILY</scope>
</reference>
<reference key="5">
    <citation type="journal article" date="2005" name="Protein Sci.">
        <title>Structure of the B3 domain from Arabidopsis thaliana protein At1g16640.</title>
        <authorList>
            <person name="Waltner J.K."/>
            <person name="Peterson F.C."/>
            <person name="Lytle B.L."/>
            <person name="Volkman B.F."/>
        </authorList>
    </citation>
    <scope>STRUCTURE BY NMR OF 1-102</scope>
</reference>
<comment type="interaction">
    <interactant intactId="EBI-15196539">
        <id>Q9FX77</id>
    </interactant>
    <interactant intactId="EBI-15192535">
        <id>F4JI72</id>
        <label>At4g03250</label>
    </interactant>
    <organismsDiffer>false</organismsDiffer>
    <experiments>3</experiments>
</comment>
<comment type="interaction">
    <interactant intactId="EBI-15196539">
        <id>Q9FX77</id>
    </interactant>
    <interactant intactId="EBI-4424563">
        <id>Q93Z00</id>
        <label>TCP14</label>
    </interactant>
    <organismsDiffer>false</organismsDiffer>
    <experiments>3</experiments>
</comment>
<comment type="subcellular location">
    <subcellularLocation>
        <location evidence="1">Nucleus</location>
    </subcellularLocation>
</comment>
<comment type="miscellaneous">
    <text>Putative DNA-binding elements conserved in B3 domains from the RAV, ARF and ABI3/VP1 subfamilies are largely absent in At1g16640, suggesting that B3 domains could function in contexts other than transcriptional regulation.</text>
</comment>
<protein>
    <recommendedName>
        <fullName>B3 domain-containing protein At1g16640</fullName>
    </recommendedName>
</protein>
<dbReference type="EMBL" id="AC011808">
    <property type="protein sequence ID" value="AAG10819.1"/>
    <property type="molecule type" value="Genomic_DNA"/>
</dbReference>
<dbReference type="EMBL" id="CP002684">
    <property type="protein sequence ID" value="AEE29479.1"/>
    <property type="molecule type" value="Genomic_DNA"/>
</dbReference>
<dbReference type="EMBL" id="BT012511">
    <property type="protein sequence ID" value="AAS99655.1"/>
    <property type="molecule type" value="mRNA"/>
</dbReference>
<dbReference type="EMBL" id="BT014811">
    <property type="protein sequence ID" value="AAT41794.1"/>
    <property type="molecule type" value="mRNA"/>
</dbReference>
<dbReference type="PIR" id="E86301">
    <property type="entry name" value="E86301"/>
</dbReference>
<dbReference type="RefSeq" id="NP_173109.1">
    <property type="nucleotide sequence ID" value="NM_101525.4"/>
</dbReference>
<dbReference type="PDB" id="1YEL">
    <property type="method" value="NMR"/>
    <property type="chains" value="A=1-102"/>
</dbReference>
<dbReference type="PDBsum" id="1YEL"/>
<dbReference type="BMRB" id="Q9FX77"/>
<dbReference type="SMR" id="Q9FX77"/>
<dbReference type="BioGRID" id="23473">
    <property type="interactions" value="26"/>
</dbReference>
<dbReference type="FunCoup" id="Q9FX77">
    <property type="interactions" value="13"/>
</dbReference>
<dbReference type="IntAct" id="Q9FX77">
    <property type="interactions" value="20"/>
</dbReference>
<dbReference type="STRING" id="3702.Q9FX77"/>
<dbReference type="PaxDb" id="3702-AT1G16640.1"/>
<dbReference type="ProteomicsDB" id="243034"/>
<dbReference type="DNASU" id="838233"/>
<dbReference type="EnsemblPlants" id="AT1G16640.1">
    <property type="protein sequence ID" value="AT1G16640.1"/>
    <property type="gene ID" value="AT1G16640"/>
</dbReference>
<dbReference type="GeneID" id="838233"/>
<dbReference type="Gramene" id="AT1G16640.1">
    <property type="protein sequence ID" value="AT1G16640.1"/>
    <property type="gene ID" value="AT1G16640"/>
</dbReference>
<dbReference type="KEGG" id="ath:AT1G16640"/>
<dbReference type="Araport" id="AT1G16640"/>
<dbReference type="TAIR" id="AT1G16640"/>
<dbReference type="eggNOG" id="ENOG502R26N">
    <property type="taxonomic scope" value="Eukaryota"/>
</dbReference>
<dbReference type="HOGENOM" id="CLU_1837898_0_0_1"/>
<dbReference type="InParanoid" id="Q9FX77"/>
<dbReference type="OMA" id="RSWTIRM"/>
<dbReference type="OrthoDB" id="1666376at2759"/>
<dbReference type="PhylomeDB" id="Q9FX77"/>
<dbReference type="EvolutionaryTrace" id="Q9FX77"/>
<dbReference type="PRO" id="PR:Q9FX77"/>
<dbReference type="Proteomes" id="UP000006548">
    <property type="component" value="Chromosome 1"/>
</dbReference>
<dbReference type="ExpressionAtlas" id="Q9FX77">
    <property type="expression patterns" value="baseline and differential"/>
</dbReference>
<dbReference type="GO" id="GO:0005634">
    <property type="term" value="C:nucleus"/>
    <property type="evidence" value="ECO:0007669"/>
    <property type="project" value="UniProtKB-SubCell"/>
</dbReference>
<dbReference type="GO" id="GO:0003677">
    <property type="term" value="F:DNA binding"/>
    <property type="evidence" value="ECO:0007669"/>
    <property type="project" value="UniProtKB-KW"/>
</dbReference>
<dbReference type="CDD" id="cd10015">
    <property type="entry name" value="BfiI_C_EcoRII_N_B3"/>
    <property type="match status" value="1"/>
</dbReference>
<dbReference type="Gene3D" id="2.40.330.10">
    <property type="entry name" value="DNA-binding pseudobarrel domain"/>
    <property type="match status" value="1"/>
</dbReference>
<dbReference type="InterPro" id="IPR003340">
    <property type="entry name" value="B3_DNA-bd"/>
</dbReference>
<dbReference type="InterPro" id="IPR015300">
    <property type="entry name" value="DNA-bd_pseudobarrel_sf"/>
</dbReference>
<dbReference type="InterPro" id="IPR050655">
    <property type="entry name" value="Plant_B3_domain"/>
</dbReference>
<dbReference type="PANTHER" id="PTHR31920">
    <property type="entry name" value="B3 DOMAIN-CONTAINING"/>
    <property type="match status" value="1"/>
</dbReference>
<dbReference type="PANTHER" id="PTHR31920:SF145">
    <property type="entry name" value="B3 DOMAIN-CONTAINING PROTEIN REM20-LIKE ISOFORM X1"/>
    <property type="match status" value="1"/>
</dbReference>
<dbReference type="Pfam" id="PF02362">
    <property type="entry name" value="B3"/>
    <property type="match status" value="1"/>
</dbReference>
<dbReference type="SMART" id="SM01019">
    <property type="entry name" value="B3"/>
    <property type="match status" value="1"/>
</dbReference>
<dbReference type="SUPFAM" id="SSF101936">
    <property type="entry name" value="DNA-binding pseudobarrel domain"/>
    <property type="match status" value="1"/>
</dbReference>
<dbReference type="PROSITE" id="PS50863">
    <property type="entry name" value="B3"/>
    <property type="match status" value="1"/>
</dbReference>
<proteinExistence type="evidence at protein level"/>
<sequence length="134" mass="15792">MADTGEVQFMKPFISEKSSKSLEIPLGFNEYFPAPFPITVDLLDYSGRSWTVRMKKRGEKVFLTVGWENFVKDNNLEDGKYLQFIYDRDRTFYVIIYGHNMCSEYRDFPQVAVEVDDYENGEEEEDGDDQDKHQ</sequence>
<accession>Q9FX77</accession>